<feature type="peptide" id="PRO_1000216177" description="thr operon leader peptide">
    <location>
        <begin position="1"/>
        <end position="21"/>
    </location>
</feature>
<evidence type="ECO:0000255" key="1">
    <source>
        <dbReference type="HAMAP-Rule" id="MF_01907"/>
    </source>
</evidence>
<protein>
    <recommendedName>
        <fullName evidence="1">thr operon leader peptide</fullName>
    </recommendedName>
    <alternativeName>
        <fullName evidence="1">thr operon attenuator</fullName>
    </alternativeName>
</protein>
<gene>
    <name evidence="1" type="primary">thrL</name>
    <name type="ordered locus">BWG_0001</name>
</gene>
<name>LPT_ECOBW</name>
<proteinExistence type="inferred from homology"/>
<organism>
    <name type="scientific">Escherichia coli (strain K12 / MC4100 / BW2952)</name>
    <dbReference type="NCBI Taxonomy" id="595496"/>
    <lineage>
        <taxon>Bacteria</taxon>
        <taxon>Pseudomonadati</taxon>
        <taxon>Pseudomonadota</taxon>
        <taxon>Gammaproteobacteria</taxon>
        <taxon>Enterobacterales</taxon>
        <taxon>Enterobacteriaceae</taxon>
        <taxon>Escherichia</taxon>
    </lineage>
</organism>
<dbReference type="EMBL" id="CP001396">
    <property type="protein sequence ID" value="ACR65648.1"/>
    <property type="molecule type" value="Genomic_DNA"/>
</dbReference>
<dbReference type="RefSeq" id="WP_001386572.1">
    <property type="nucleotide sequence ID" value="NC_012759.1"/>
</dbReference>
<dbReference type="GeneID" id="93777441"/>
<dbReference type="KEGG" id="ebw:BWG_0001"/>
<dbReference type="HOGENOM" id="CLU_221491_0_1_6"/>
<dbReference type="GO" id="GO:0009088">
    <property type="term" value="P:threonine biosynthetic process"/>
    <property type="evidence" value="ECO:0007669"/>
    <property type="project" value="UniProtKB-UniRule"/>
</dbReference>
<dbReference type="GO" id="GO:0031556">
    <property type="term" value="P:transcriptional attenuation by ribosome"/>
    <property type="evidence" value="ECO:0007669"/>
    <property type="project" value="UniProtKB-UniRule"/>
</dbReference>
<dbReference type="HAMAP" id="MF_01907">
    <property type="entry name" value="Leader_Thr"/>
    <property type="match status" value="1"/>
</dbReference>
<dbReference type="InterPro" id="IPR011720">
    <property type="entry name" value="Thr_lead_pept"/>
</dbReference>
<dbReference type="NCBIfam" id="NF007329">
    <property type="entry name" value="PRK09816.1"/>
    <property type="match status" value="1"/>
</dbReference>
<dbReference type="NCBIfam" id="TIGR02077">
    <property type="entry name" value="thr_lead_pep"/>
    <property type="match status" value="1"/>
</dbReference>
<dbReference type="Pfam" id="PF08254">
    <property type="entry name" value="Leader_Thr"/>
    <property type="match status" value="1"/>
</dbReference>
<reference key="1">
    <citation type="journal article" date="2009" name="J. Bacteriol.">
        <title>Genomic sequencing reveals regulatory mutations and recombinational events in the widely used MC4100 lineage of Escherichia coli K-12.</title>
        <authorList>
            <person name="Ferenci T."/>
            <person name="Zhou Z."/>
            <person name="Betteridge T."/>
            <person name="Ren Y."/>
            <person name="Liu Y."/>
            <person name="Feng L."/>
            <person name="Reeves P.R."/>
            <person name="Wang L."/>
        </authorList>
    </citation>
    <scope>NUCLEOTIDE SEQUENCE [LARGE SCALE GENOMIC DNA]</scope>
    <source>
        <strain>K12 / MC4100 / BW2952</strain>
    </source>
</reference>
<sequence length="21" mass="2138">MKRISTTITTTITITTGNGAG</sequence>
<accession>C4ZPS8</accession>
<keyword id="KW-0028">Amino-acid biosynthesis</keyword>
<keyword id="KW-0428">Leader peptide</keyword>
<keyword id="KW-0791">Threonine biosynthesis</keyword>
<comment type="function">
    <text evidence="1">This protein is involved in control of the biosynthesis of threonine.</text>
</comment>
<comment type="similarity">
    <text evidence="1">Belongs to the thr operon leader peptide family.</text>
</comment>